<protein>
    <recommendedName>
        <fullName evidence="3">Aquaporin-1</fullName>
    </recommendedName>
</protein>
<gene>
    <name evidence="3" type="primary">AQPF1</name>
</gene>
<comment type="function">
    <text evidence="2">Water channel required to facilitate the transport of water across membranes (PubMed:23157494). Stimulates plant drought tolerance by facilitating the transport of water from the arbuscular mycorrhiza fungus to host plants (PubMed:23157494).</text>
</comment>
<comment type="catalytic activity">
    <reaction evidence="2">
        <text>H2O(in) = H2O(out)</text>
        <dbReference type="Rhea" id="RHEA:29667"/>
        <dbReference type="ChEBI" id="CHEBI:15377"/>
    </reaction>
</comment>
<comment type="activity regulation">
    <text evidence="2">Polyethylene glycol (PEG) stimulates whereas glycerol inhibits the aquaporin activity.</text>
</comment>
<comment type="subcellular location">
    <subcellularLocation>
        <location evidence="2">Cell membrane</location>
        <topology evidence="1">Multi-pass membrane protein</topology>
    </subcellularLocation>
</comment>
<comment type="induction">
    <text evidence="2">Expression is increased significantly in arbuscule-enriched cortical cells and extraradical mycelia of maize roots under drought stress.</text>
</comment>
<comment type="domain">
    <text evidence="5">Aquaporins contain two tandem repeats each containing three membrane-spanning domains and a pore-forming loop with the signature motif Asn-Pro-Ala (NPA) (Probable). AQPF1 has NPS/NPA motifs which is in accordance with the fungal aquaporins (NPx and NxA) (Probable).</text>
</comment>
<comment type="similarity">
    <text evidence="4">Belongs to the MIP/aquaporin (TC 1.A.8) family.</text>
</comment>
<reference key="1">
    <citation type="journal article" date="2013" name="New Phytol.">
        <title>First cloning and characterization of two functional aquaporin genes from an arbuscular mycorrhizal fungus Glomus intraradices.</title>
        <authorList>
            <person name="Li T."/>
            <person name="Hu Y.J."/>
            <person name="Hao Z.P."/>
            <person name="Li H."/>
            <person name="Wang Y.S."/>
            <person name="Chen B.D."/>
        </authorList>
    </citation>
    <scope>NUCLEOTIDE SEQUENCE [MRNA]</scope>
    <scope>FUNCTION</scope>
    <scope>DOMAIN</scope>
    <scope>TOPOLOGY</scope>
    <scope>SUBCELLULAR LOCATION</scope>
    <scope>TRANSPORTER ACTIVITY</scope>
    <scope>ACTIVITY REGULATION</scope>
    <scope>INDUCTION</scope>
</reference>
<feature type="chain" id="PRO_0000457436" description="Aquaporin-1">
    <location>
        <begin position="1"/>
        <end position="276"/>
    </location>
</feature>
<feature type="topological domain" description="Cytoplasmic" evidence="5">
    <location>
        <begin position="1"/>
        <end position="10"/>
    </location>
</feature>
<feature type="transmembrane region" description="Helical" evidence="1">
    <location>
        <begin position="11"/>
        <end position="31"/>
    </location>
</feature>
<feature type="topological domain" description="Extracellular" evidence="5">
    <location>
        <begin position="32"/>
        <end position="46"/>
    </location>
</feature>
<feature type="transmembrane region" description="Helical" evidence="1">
    <location>
        <begin position="47"/>
        <end position="67"/>
    </location>
</feature>
<feature type="topological domain" description="Cytoplasmic" evidence="5">
    <location>
        <begin position="68"/>
        <end position="93"/>
    </location>
</feature>
<feature type="transmembrane region" description="Helical" evidence="1">
    <location>
        <begin position="94"/>
        <end position="114"/>
    </location>
</feature>
<feature type="topological domain" description="Extracellular" evidence="5">
    <location>
        <begin position="115"/>
        <end position="133"/>
    </location>
</feature>
<feature type="transmembrane region" description="Helical" evidence="1">
    <location>
        <begin position="134"/>
        <end position="154"/>
    </location>
</feature>
<feature type="topological domain" description="Cytoplasmic" evidence="5">
    <location>
        <begin position="155"/>
        <end position="159"/>
    </location>
</feature>
<feature type="transmembrane region" description="Helical" evidence="1">
    <location>
        <begin position="160"/>
        <end position="180"/>
    </location>
</feature>
<feature type="topological domain" description="Extracellular" evidence="5">
    <location>
        <begin position="181"/>
        <end position="204"/>
    </location>
</feature>
<feature type="transmembrane region" description="Helical" evidence="1">
    <location>
        <begin position="205"/>
        <end position="225"/>
    </location>
</feature>
<feature type="topological domain" description="Cytoplasmic" evidence="5">
    <location>
        <begin position="226"/>
        <end position="276"/>
    </location>
</feature>
<feature type="short sequence motif" description="NPA 1" evidence="5">
    <location>
        <begin position="73"/>
        <end position="75"/>
    </location>
</feature>
<feature type="short sequence motif" description="NPA 2" evidence="5">
    <location>
        <begin position="186"/>
        <end position="188"/>
    </location>
</feature>
<proteinExistence type="evidence at protein level"/>
<name>AQP1_RHIIR</name>
<keyword id="KW-1003">Cell membrane</keyword>
<keyword id="KW-0472">Membrane</keyword>
<keyword id="KW-0677">Repeat</keyword>
<keyword id="KW-0812">Transmembrane</keyword>
<keyword id="KW-1133">Transmembrane helix</keyword>
<keyword id="KW-0813">Transport</keyword>
<organism>
    <name type="scientific">Rhizophagus irregularis</name>
    <name type="common">Arbuscular mycorrhizal fungus</name>
    <name type="synonym">Glomus intraradices</name>
    <dbReference type="NCBI Taxonomy" id="4876"/>
    <lineage>
        <taxon>Eukaryota</taxon>
        <taxon>Fungi</taxon>
        <taxon>Fungi incertae sedis</taxon>
        <taxon>Mucoromycota</taxon>
        <taxon>Glomeromycotina</taxon>
        <taxon>Glomeromycetes</taxon>
        <taxon>Glomerales</taxon>
        <taxon>Glomeraceae</taxon>
        <taxon>Rhizophagus</taxon>
    </lineage>
</organism>
<dbReference type="EMBL" id="JQ412059">
    <property type="protein sequence ID" value="AFK93202.1"/>
    <property type="molecule type" value="mRNA"/>
</dbReference>
<dbReference type="SMR" id="I3W9F6"/>
<dbReference type="VEuPathDB" id="FungiDB:FUN_001550"/>
<dbReference type="VEuPathDB" id="FungiDB:RhiirA1_408746"/>
<dbReference type="VEuPathDB" id="FungiDB:RhiirFUN_026390"/>
<dbReference type="GO" id="GO:0005886">
    <property type="term" value="C:plasma membrane"/>
    <property type="evidence" value="ECO:0007669"/>
    <property type="project" value="UniProtKB-SubCell"/>
</dbReference>
<dbReference type="GO" id="GO:0015250">
    <property type="term" value="F:water channel activity"/>
    <property type="evidence" value="ECO:0007669"/>
    <property type="project" value="TreeGrafter"/>
</dbReference>
<dbReference type="Gene3D" id="1.20.1080.10">
    <property type="entry name" value="Glycerol uptake facilitator protein"/>
    <property type="match status" value="1"/>
</dbReference>
<dbReference type="InterPro" id="IPR023271">
    <property type="entry name" value="Aquaporin-like"/>
</dbReference>
<dbReference type="InterPro" id="IPR034294">
    <property type="entry name" value="Aquaporin_transptr"/>
</dbReference>
<dbReference type="InterPro" id="IPR000425">
    <property type="entry name" value="MIP"/>
</dbReference>
<dbReference type="PANTHER" id="PTHR19139">
    <property type="entry name" value="AQUAPORIN TRANSPORTER"/>
    <property type="match status" value="1"/>
</dbReference>
<dbReference type="PANTHER" id="PTHR19139:SF199">
    <property type="entry name" value="MIP17260P"/>
    <property type="match status" value="1"/>
</dbReference>
<dbReference type="Pfam" id="PF00230">
    <property type="entry name" value="MIP"/>
    <property type="match status" value="1"/>
</dbReference>
<dbReference type="PRINTS" id="PR00783">
    <property type="entry name" value="MINTRINSICP"/>
</dbReference>
<dbReference type="SUPFAM" id="SSF81338">
    <property type="entry name" value="Aquaporin-like"/>
    <property type="match status" value="1"/>
</dbReference>
<accession>I3W9F6</accession>
<sequence>MLDAEQKKNYVAGAFGEFVGTAYFLFMGVGGAVNFLNNAAGSPLPGFAIPFCFGFSLFVNVFIWAPISGGVFNPSITIALMATNPKDFPWYRGILYIVSQFLGALFGSWLIDLIQPEAPNAATLLADGVSVAQGLFMEMFATSVLTMAVLILAGERYGKYLAPFGIGMSLFISALCAGPYTGASLNPARTLGPAIVANQYGRAHWIYYVGPTLGSLLAAGYWHILRILNIDVVDLKNVLNKCKKCGKEDPRISLKHCEECLKDDPKPEKYDIESQN</sequence>
<evidence type="ECO:0000255" key="1"/>
<evidence type="ECO:0000269" key="2">
    <source>
    </source>
</evidence>
<evidence type="ECO:0000303" key="3">
    <source>
    </source>
</evidence>
<evidence type="ECO:0000305" key="4"/>
<evidence type="ECO:0000305" key="5">
    <source>
    </source>
</evidence>